<protein>
    <recommendedName>
        <fullName evidence="6">U-actitoxin-Avd3s</fullName>
        <shortName evidence="6">U-AITX-Avd3s</shortName>
    </recommendedName>
    <alternativeName>
        <fullName evidence="5">AsKC16</fullName>
    </alternativeName>
</protein>
<evidence type="ECO:0000250" key="1"/>
<evidence type="ECO:0000250" key="2">
    <source>
        <dbReference type="UniProtKB" id="P10280"/>
    </source>
</evidence>
<evidence type="ECO:0000250" key="3">
    <source>
        <dbReference type="UniProtKB" id="Q9TWF8"/>
    </source>
</evidence>
<evidence type="ECO:0000255" key="4">
    <source>
        <dbReference type="PROSITE-ProRule" id="PRU00031"/>
    </source>
</evidence>
<evidence type="ECO:0000303" key="5">
    <source>
    </source>
</evidence>
<evidence type="ECO:0000303" key="6">
    <source>
    </source>
</evidence>
<evidence type="ECO:0000305" key="7"/>
<accession>P0DN20</accession>
<name>VKTG_ANEVI</name>
<reference key="1">
    <citation type="journal article" date="2009" name="BMC Genomics">
        <title>Comprehensive EST analysis of the symbiotic sea anemone, Anemonia viridis.</title>
        <authorList>
            <person name="Sabourault C."/>
            <person name="Ganot P."/>
            <person name="Deleury E."/>
            <person name="Allemand D."/>
            <person name="Furla P."/>
        </authorList>
    </citation>
    <scope>NUCLEOTIDE SEQUENCE [MRNA]</scope>
</reference>
<reference key="2">
    <citation type="journal article" date="2011" name="BMC Genomics">
        <title>The mining of toxin-like polypeptides from EST database by single residue distribution analysis.</title>
        <authorList>
            <person name="Kozlov S."/>
            <person name="Grishin E."/>
        </authorList>
    </citation>
    <scope>NOMENCLATURE</scope>
</reference>
<reference key="3">
    <citation type="journal article" date="2012" name="Toxicon">
        <title>Development of a rational nomenclature for naming peptide and protein toxins from sea anemones.</title>
        <authorList>
            <person name="Oliveira J.S."/>
            <person name="Fuentes-Silva D."/>
            <person name="King G.F."/>
        </authorList>
    </citation>
    <scope>NOMENCLATURE</scope>
</reference>
<proteinExistence type="evidence at transcript level"/>
<feature type="signal peptide" evidence="2">
    <location>
        <begin position="1" status="less than"/>
        <end position="14"/>
    </location>
</feature>
<feature type="chain" id="PRO_0000433777" description="U-actitoxin-Avd3s">
    <location>
        <begin position="15"/>
        <end position="73"/>
    </location>
</feature>
<feature type="propeptide" id="PRO_0000433778" evidence="2">
    <location>
        <begin position="74"/>
        <end position="80"/>
    </location>
</feature>
<feature type="domain" description="BPTI/Kunitz inhibitor" evidence="4">
    <location>
        <begin position="19"/>
        <end position="69"/>
    </location>
</feature>
<feature type="site" description="Reactive bond" evidence="1">
    <location>
        <begin position="29"/>
        <end position="30"/>
    </location>
</feature>
<feature type="disulfide bond" evidence="4">
    <location>
        <begin position="19"/>
        <end position="69"/>
    </location>
</feature>
<feature type="disulfide bond" evidence="4">
    <location>
        <begin position="28"/>
        <end position="52"/>
    </location>
</feature>
<feature type="disulfide bond" evidence="4">
    <location>
        <begin position="44"/>
        <end position="65"/>
    </location>
</feature>
<feature type="non-terminal residue" evidence="5">
    <location>
        <position position="1"/>
    </location>
</feature>
<dbReference type="EMBL" id="FK744640">
    <property type="status" value="NOT_ANNOTATED_CDS"/>
    <property type="molecule type" value="mRNA"/>
</dbReference>
<dbReference type="SMR" id="P0DN20"/>
<dbReference type="GO" id="GO:0005615">
    <property type="term" value="C:extracellular space"/>
    <property type="evidence" value="ECO:0007669"/>
    <property type="project" value="TreeGrafter"/>
</dbReference>
<dbReference type="GO" id="GO:0042151">
    <property type="term" value="C:nematocyst"/>
    <property type="evidence" value="ECO:0007669"/>
    <property type="project" value="UniProtKB-SubCell"/>
</dbReference>
<dbReference type="GO" id="GO:0015459">
    <property type="term" value="F:potassium channel regulator activity"/>
    <property type="evidence" value="ECO:0007669"/>
    <property type="project" value="UniProtKB-KW"/>
</dbReference>
<dbReference type="GO" id="GO:0004867">
    <property type="term" value="F:serine-type endopeptidase inhibitor activity"/>
    <property type="evidence" value="ECO:0007669"/>
    <property type="project" value="UniProtKB-KW"/>
</dbReference>
<dbReference type="GO" id="GO:0090729">
    <property type="term" value="F:toxin activity"/>
    <property type="evidence" value="ECO:0007669"/>
    <property type="project" value="UniProtKB-KW"/>
</dbReference>
<dbReference type="FunFam" id="4.10.410.10:FF:000021">
    <property type="entry name" value="Serine protease inhibitor, putative"/>
    <property type="match status" value="1"/>
</dbReference>
<dbReference type="Gene3D" id="4.10.410.10">
    <property type="entry name" value="Pancreatic trypsin inhibitor Kunitz domain"/>
    <property type="match status" value="1"/>
</dbReference>
<dbReference type="InterPro" id="IPR002223">
    <property type="entry name" value="Kunitz_BPTI"/>
</dbReference>
<dbReference type="InterPro" id="IPR036880">
    <property type="entry name" value="Kunitz_BPTI_sf"/>
</dbReference>
<dbReference type="InterPro" id="IPR020901">
    <property type="entry name" value="Prtase_inh_Kunz-CS"/>
</dbReference>
<dbReference type="InterPro" id="IPR050098">
    <property type="entry name" value="TFPI/VKTCI-like"/>
</dbReference>
<dbReference type="PANTHER" id="PTHR10083:SF217">
    <property type="entry name" value="BOOPHILIN-H2"/>
    <property type="match status" value="1"/>
</dbReference>
<dbReference type="PANTHER" id="PTHR10083">
    <property type="entry name" value="KUNITZ-TYPE PROTEASE INHIBITOR-RELATED"/>
    <property type="match status" value="1"/>
</dbReference>
<dbReference type="Pfam" id="PF00014">
    <property type="entry name" value="Kunitz_BPTI"/>
    <property type="match status" value="1"/>
</dbReference>
<dbReference type="PRINTS" id="PR00759">
    <property type="entry name" value="BASICPTASE"/>
</dbReference>
<dbReference type="SMART" id="SM00131">
    <property type="entry name" value="KU"/>
    <property type="match status" value="1"/>
</dbReference>
<dbReference type="SUPFAM" id="SSF57362">
    <property type="entry name" value="BPTI-like"/>
    <property type="match status" value="1"/>
</dbReference>
<dbReference type="PROSITE" id="PS00280">
    <property type="entry name" value="BPTI_KUNITZ_1"/>
    <property type="match status" value="1"/>
</dbReference>
<dbReference type="PROSITE" id="PS50279">
    <property type="entry name" value="BPTI_KUNITZ_2"/>
    <property type="match status" value="1"/>
</dbReference>
<keyword id="KW-1015">Disulfide bond</keyword>
<keyword id="KW-0872">Ion channel impairing toxin</keyword>
<keyword id="KW-0166">Nematocyst</keyword>
<keyword id="KW-0632">Potassium channel impairing toxin</keyword>
<keyword id="KW-0646">Protease inhibitor</keyword>
<keyword id="KW-0964">Secreted</keyword>
<keyword id="KW-0722">Serine protease inhibitor</keyword>
<keyword id="KW-0732">Signal</keyword>
<keyword id="KW-0800">Toxin</keyword>
<keyword id="KW-1220">Voltage-gated potassium channel impairing toxin</keyword>
<organism>
    <name type="scientific">Anemonia viridis</name>
    <name type="common">Snakelocks anemone</name>
    <dbReference type="NCBI Taxonomy" id="51769"/>
    <lineage>
        <taxon>Eukaryota</taxon>
        <taxon>Metazoa</taxon>
        <taxon>Cnidaria</taxon>
        <taxon>Anthozoa</taxon>
        <taxon>Hexacorallia</taxon>
        <taxon>Actiniaria</taxon>
        <taxon>Actiniidae</taxon>
        <taxon>Anemonia</taxon>
    </lineage>
</organism>
<comment type="function">
    <text evidence="2 3">Serine protease inhibitor that inhibits both tissue and plasma kallikreins. Has hemolytic activity. Inhibits voltage-gated potassium channels (Kv).</text>
</comment>
<comment type="subcellular location">
    <subcellularLocation>
        <location evidence="7">Secreted</location>
    </subcellularLocation>
    <subcellularLocation>
        <location evidence="7">Nematocyst</location>
    </subcellularLocation>
</comment>
<comment type="similarity">
    <text evidence="7">Belongs to the venom Kunitz-type family. Sea anemone type 2 potassium channel toxin subfamily.</text>
</comment>
<comment type="caution">
    <text evidence="7">Opinions are divided on whether Anemonia viridis (Forsskal, 1775) and Anemonia sulcata (Pennant, 1777) are separate species.</text>
</comment>
<sequence>FLLCFFLVADVSYGINKDCLLPMDVGRCRARHPRYYYNSSSKRCEMFNYGGCRGNANNFITKKECEKVCGVRSRDSPKEN</sequence>